<sequence length="159" mass="18164">MPQLDKFTYFTQFFWSCLFLFTFYIAICNDGDGLLGISRILKLRNQLLSHRTNNIRSKDPNSLEDILRKGFSTGLSYMYSSLFEDSQWCKAVDLLGKRRKITLISCFGEISGSRGMERNIFYLISKSSYSTSSNPGWGITCRNDIMLIHVPHGQGSIGF</sequence>
<geneLocation type="mitochondrion"/>
<comment type="function">
    <text evidence="1">This is one of the chains of the nonenzymatic component (CF(0) subunit) of the mitochondrial ATPase complex.</text>
</comment>
<comment type="catalytic activity">
    <reaction>
        <text>ATP + H2O + 4 H(+)(in) = ADP + phosphate + 5 H(+)(out)</text>
        <dbReference type="Rhea" id="RHEA:57720"/>
        <dbReference type="ChEBI" id="CHEBI:15377"/>
        <dbReference type="ChEBI" id="CHEBI:15378"/>
        <dbReference type="ChEBI" id="CHEBI:30616"/>
        <dbReference type="ChEBI" id="CHEBI:43474"/>
        <dbReference type="ChEBI" id="CHEBI:456216"/>
        <dbReference type="EC" id="7.1.2.2"/>
    </reaction>
</comment>
<comment type="subunit">
    <text evidence="1">F-type ATPases have 2 components, CF(1) - the catalytic core - and CF(0) - the membrane proton channel. CF(1) has five subunits: alpha(3), beta(3), gamma(1), delta(1), epsilon(1). CF(0) has three main subunits: a, b and c (By similarity).</text>
</comment>
<comment type="subcellular location">
    <subcellularLocation>
        <location evidence="1">Mitochondrion membrane</location>
        <topology evidence="1">Single-pass membrane protein</topology>
    </subcellularLocation>
</comment>
<comment type="similarity">
    <text evidence="3">Belongs to the ATPase protein YMF19 family.</text>
</comment>
<reference key="1">
    <citation type="journal article" date="1990" name="Curr. Genet.">
        <title>The cytochrome oxidase subunit III gene in sunflower mitochondria is cotranscribed with an open reading frame conserved in higher plants.</title>
        <authorList>
            <person name="Quagliariello C."/>
            <person name="Saiardi A."/>
            <person name="Gallerani R."/>
        </authorList>
    </citation>
    <scope>NUCLEOTIDE SEQUENCE [GENOMIC DNA]</scope>
    <source>
        <strain>cv. Gloriasol</strain>
    </source>
</reference>
<reference key="2">
    <citation type="journal article" date="1994" name="Plant Mol. Biol.">
        <title>Characterisation and expression of the mitochondrial genome of a new type of cytoplasmic male-sterile sunflower.</title>
        <authorList>
            <person name="Spassova M."/>
            <person name="Moneger F."/>
            <person name="Leaver C.J."/>
            <person name="Petrov P."/>
            <person name="Atanassov A."/>
            <person name="Nijkamp H.J.J."/>
            <person name="Hille J."/>
        </authorList>
    </citation>
    <scope>NUCLEOTIDE SEQUENCE [GENOMIC DNA]</scope>
    <source>
        <strain>cv. Texanus ANT1</strain>
    </source>
</reference>
<gene>
    <name type="primary">YMF19</name>
</gene>
<organism>
    <name type="scientific">Helianthus annuus</name>
    <name type="common">Common sunflower</name>
    <dbReference type="NCBI Taxonomy" id="4232"/>
    <lineage>
        <taxon>Eukaryota</taxon>
        <taxon>Viridiplantae</taxon>
        <taxon>Streptophyta</taxon>
        <taxon>Embryophyta</taxon>
        <taxon>Tracheophyta</taxon>
        <taxon>Spermatophyta</taxon>
        <taxon>Magnoliopsida</taxon>
        <taxon>eudicotyledons</taxon>
        <taxon>Gunneridae</taxon>
        <taxon>Pentapetalae</taxon>
        <taxon>asterids</taxon>
        <taxon>campanulids</taxon>
        <taxon>Asterales</taxon>
        <taxon>Asteraceae</taxon>
        <taxon>Asteroideae</taxon>
        <taxon>Heliantheae alliance</taxon>
        <taxon>Heliantheae</taxon>
        <taxon>Helianthus</taxon>
    </lineage>
</organism>
<dbReference type="EC" id="7.1.2.2"/>
<dbReference type="EMBL" id="X57669">
    <property type="protein sequence ID" value="CAA40864.1"/>
    <property type="molecule type" value="Genomic_DNA"/>
</dbReference>
<dbReference type="EMBL" id="X82386">
    <property type="protein sequence ID" value="CAA57787.1"/>
    <property type="molecule type" value="Genomic_DNA"/>
</dbReference>
<dbReference type="PIR" id="S14122">
    <property type="entry name" value="S14122"/>
</dbReference>
<dbReference type="SMR" id="P41248"/>
<dbReference type="GO" id="GO:0031966">
    <property type="term" value="C:mitochondrial membrane"/>
    <property type="evidence" value="ECO:0007669"/>
    <property type="project" value="UniProtKB-SubCell"/>
</dbReference>
<dbReference type="GO" id="GO:0045259">
    <property type="term" value="C:proton-transporting ATP synthase complex"/>
    <property type="evidence" value="ECO:0007669"/>
    <property type="project" value="UniProtKB-KW"/>
</dbReference>
<dbReference type="GO" id="GO:0005524">
    <property type="term" value="F:ATP binding"/>
    <property type="evidence" value="ECO:0007669"/>
    <property type="project" value="UniProtKB-KW"/>
</dbReference>
<dbReference type="GO" id="GO:0006754">
    <property type="term" value="P:ATP biosynthetic process"/>
    <property type="evidence" value="ECO:0007669"/>
    <property type="project" value="UniProtKB-KW"/>
</dbReference>
<dbReference type="GO" id="GO:1902600">
    <property type="term" value="P:proton transmembrane transport"/>
    <property type="evidence" value="ECO:0007669"/>
    <property type="project" value="UniProtKB-KW"/>
</dbReference>
<dbReference type="InterPro" id="IPR009455">
    <property type="entry name" value="YMF19"/>
</dbReference>
<dbReference type="InterPro" id="IPR044975">
    <property type="entry name" value="YMF19-like"/>
</dbReference>
<dbReference type="InterPro" id="IPR003319">
    <property type="entry name" value="YMF19-like_N"/>
</dbReference>
<dbReference type="PANTHER" id="PTHR36816">
    <property type="entry name" value="ATP SYNTHASE PROTEIN YMF19"/>
    <property type="match status" value="1"/>
</dbReference>
<dbReference type="PANTHER" id="PTHR36816:SF1">
    <property type="entry name" value="ATP SYNTHASE PROTEIN YMF19"/>
    <property type="match status" value="1"/>
</dbReference>
<dbReference type="Pfam" id="PF02326">
    <property type="entry name" value="YMF19"/>
    <property type="match status" value="1"/>
</dbReference>
<dbReference type="Pfam" id="PF06449">
    <property type="entry name" value="YMF19_C"/>
    <property type="match status" value="1"/>
</dbReference>
<accession>P41248</accession>
<feature type="chain" id="PRO_0000196843" description="Putative ATP synthase protein YMF19">
    <location>
        <begin position="1"/>
        <end position="159"/>
    </location>
</feature>
<feature type="transmembrane region" description="Helical" evidence="2">
    <location>
        <begin position="10"/>
        <end position="28"/>
    </location>
</feature>
<keyword id="KW-0066">ATP synthesis</keyword>
<keyword id="KW-0067">ATP-binding</keyword>
<keyword id="KW-0138">CF(0)</keyword>
<keyword id="KW-0375">Hydrogen ion transport</keyword>
<keyword id="KW-0406">Ion transport</keyword>
<keyword id="KW-0472">Membrane</keyword>
<keyword id="KW-0496">Mitochondrion</keyword>
<keyword id="KW-0547">Nucleotide-binding</keyword>
<keyword id="KW-1278">Translocase</keyword>
<keyword id="KW-0812">Transmembrane</keyword>
<keyword id="KW-1133">Transmembrane helix</keyword>
<keyword id="KW-0813">Transport</keyword>
<name>YMF19_HELAN</name>
<protein>
    <recommendedName>
        <fullName>Putative ATP synthase protein YMF19</fullName>
        <ecNumber>7.1.2.2</ecNumber>
    </recommendedName>
    <alternativeName>
        <fullName>Mitochondrial protein YMF19</fullName>
    </alternativeName>
</protein>
<evidence type="ECO:0000250" key="1"/>
<evidence type="ECO:0000255" key="2"/>
<evidence type="ECO:0000305" key="3"/>
<proteinExistence type="inferred from homology"/>